<name>RL33_PSEA6</name>
<feature type="chain" id="PRO_0000356617" description="Large ribosomal subunit protein bL33">
    <location>
        <begin position="1"/>
        <end position="51"/>
    </location>
</feature>
<keyword id="KW-0687">Ribonucleoprotein</keyword>
<keyword id="KW-0689">Ribosomal protein</keyword>
<comment type="similarity">
    <text evidence="1">Belongs to the bacterial ribosomal protein bL33 family.</text>
</comment>
<accession>Q15ZV7</accession>
<dbReference type="EMBL" id="CP000388">
    <property type="protein sequence ID" value="ABG38581.1"/>
    <property type="molecule type" value="Genomic_DNA"/>
</dbReference>
<dbReference type="RefSeq" id="WP_006993456.1">
    <property type="nucleotide sequence ID" value="NC_008228.1"/>
</dbReference>
<dbReference type="SMR" id="Q15ZV7"/>
<dbReference type="STRING" id="342610.Patl_0049"/>
<dbReference type="KEGG" id="pat:Patl_0049"/>
<dbReference type="eggNOG" id="COG0267">
    <property type="taxonomic scope" value="Bacteria"/>
</dbReference>
<dbReference type="HOGENOM" id="CLU_190949_1_1_6"/>
<dbReference type="OrthoDB" id="21586at2"/>
<dbReference type="Proteomes" id="UP000001981">
    <property type="component" value="Chromosome"/>
</dbReference>
<dbReference type="GO" id="GO:0022625">
    <property type="term" value="C:cytosolic large ribosomal subunit"/>
    <property type="evidence" value="ECO:0007669"/>
    <property type="project" value="TreeGrafter"/>
</dbReference>
<dbReference type="GO" id="GO:0003735">
    <property type="term" value="F:structural constituent of ribosome"/>
    <property type="evidence" value="ECO:0007669"/>
    <property type="project" value="InterPro"/>
</dbReference>
<dbReference type="GO" id="GO:0006412">
    <property type="term" value="P:translation"/>
    <property type="evidence" value="ECO:0007669"/>
    <property type="project" value="UniProtKB-UniRule"/>
</dbReference>
<dbReference type="FunFam" id="2.20.28.120:FF:000001">
    <property type="entry name" value="50S ribosomal protein L33"/>
    <property type="match status" value="1"/>
</dbReference>
<dbReference type="Gene3D" id="2.20.28.120">
    <property type="entry name" value="Ribosomal protein L33"/>
    <property type="match status" value="1"/>
</dbReference>
<dbReference type="HAMAP" id="MF_00294">
    <property type="entry name" value="Ribosomal_bL33"/>
    <property type="match status" value="1"/>
</dbReference>
<dbReference type="InterPro" id="IPR001705">
    <property type="entry name" value="Ribosomal_bL33"/>
</dbReference>
<dbReference type="InterPro" id="IPR018264">
    <property type="entry name" value="Ribosomal_bL33_CS"/>
</dbReference>
<dbReference type="InterPro" id="IPR038584">
    <property type="entry name" value="Ribosomal_bL33_sf"/>
</dbReference>
<dbReference type="InterPro" id="IPR011332">
    <property type="entry name" value="Ribosomal_zn-bd"/>
</dbReference>
<dbReference type="NCBIfam" id="NF001860">
    <property type="entry name" value="PRK00595.1"/>
    <property type="match status" value="1"/>
</dbReference>
<dbReference type="NCBIfam" id="TIGR01023">
    <property type="entry name" value="rpmG_bact"/>
    <property type="match status" value="1"/>
</dbReference>
<dbReference type="PANTHER" id="PTHR15238">
    <property type="entry name" value="54S RIBOSOMAL PROTEIN L39, MITOCHONDRIAL"/>
    <property type="match status" value="1"/>
</dbReference>
<dbReference type="PANTHER" id="PTHR15238:SF1">
    <property type="entry name" value="LARGE RIBOSOMAL SUBUNIT PROTEIN BL33M"/>
    <property type="match status" value="1"/>
</dbReference>
<dbReference type="Pfam" id="PF00471">
    <property type="entry name" value="Ribosomal_L33"/>
    <property type="match status" value="1"/>
</dbReference>
<dbReference type="SUPFAM" id="SSF57829">
    <property type="entry name" value="Zn-binding ribosomal proteins"/>
    <property type="match status" value="1"/>
</dbReference>
<dbReference type="PROSITE" id="PS00582">
    <property type="entry name" value="RIBOSOMAL_L33"/>
    <property type="match status" value="1"/>
</dbReference>
<reference key="1">
    <citation type="submission" date="2006-06" db="EMBL/GenBank/DDBJ databases">
        <title>Complete sequence of Pseudoalteromonas atlantica T6c.</title>
        <authorList>
            <consortium name="US DOE Joint Genome Institute"/>
            <person name="Copeland A."/>
            <person name="Lucas S."/>
            <person name="Lapidus A."/>
            <person name="Barry K."/>
            <person name="Detter J.C."/>
            <person name="Glavina del Rio T."/>
            <person name="Hammon N."/>
            <person name="Israni S."/>
            <person name="Dalin E."/>
            <person name="Tice H."/>
            <person name="Pitluck S."/>
            <person name="Saunders E."/>
            <person name="Brettin T."/>
            <person name="Bruce D."/>
            <person name="Han C."/>
            <person name="Tapia R."/>
            <person name="Gilna P."/>
            <person name="Schmutz J."/>
            <person name="Larimer F."/>
            <person name="Land M."/>
            <person name="Hauser L."/>
            <person name="Kyrpides N."/>
            <person name="Kim E."/>
            <person name="Karls A.C."/>
            <person name="Bartlett D."/>
            <person name="Higgins B.P."/>
            <person name="Richardson P."/>
        </authorList>
    </citation>
    <scope>NUCLEOTIDE SEQUENCE [LARGE SCALE GENOMIC DNA]</scope>
    <source>
        <strain>T6c / ATCC BAA-1087</strain>
    </source>
</reference>
<gene>
    <name evidence="1" type="primary">rpmG</name>
    <name type="ordered locus">Patl_0049</name>
</gene>
<evidence type="ECO:0000255" key="1">
    <source>
        <dbReference type="HAMAP-Rule" id="MF_00294"/>
    </source>
</evidence>
<evidence type="ECO:0000305" key="2"/>
<protein>
    <recommendedName>
        <fullName evidence="1">Large ribosomal subunit protein bL33</fullName>
    </recommendedName>
    <alternativeName>
        <fullName evidence="2">50S ribosomal protein L33</fullName>
    </alternativeName>
</protein>
<proteinExistence type="inferred from homology"/>
<organism>
    <name type="scientific">Pseudoalteromonas atlantica (strain T6c / ATCC BAA-1087)</name>
    <dbReference type="NCBI Taxonomy" id="3042615"/>
    <lineage>
        <taxon>Bacteria</taxon>
        <taxon>Pseudomonadati</taxon>
        <taxon>Pseudomonadota</taxon>
        <taxon>Gammaproteobacteria</taxon>
        <taxon>Alteromonadales</taxon>
        <taxon>Alteromonadaceae</taxon>
        <taxon>Paraglaciecola</taxon>
    </lineage>
</organism>
<sequence>MRDKIKLVSSAGTGFYYTTDKNKRNMPGKMEIKKFDPKVRQHVLFKEAKIK</sequence>